<reference key="1">
    <citation type="journal article" date="2003" name="Nature">
        <title>Genome sequence of Bacillus cereus and comparative analysis with Bacillus anthracis.</title>
        <authorList>
            <person name="Ivanova N."/>
            <person name="Sorokin A."/>
            <person name="Anderson I."/>
            <person name="Galleron N."/>
            <person name="Candelon B."/>
            <person name="Kapatral V."/>
            <person name="Bhattacharyya A."/>
            <person name="Reznik G."/>
            <person name="Mikhailova N."/>
            <person name="Lapidus A."/>
            <person name="Chu L."/>
            <person name="Mazur M."/>
            <person name="Goltsman E."/>
            <person name="Larsen N."/>
            <person name="D'Souza M."/>
            <person name="Walunas T."/>
            <person name="Grechkin Y."/>
            <person name="Pusch G."/>
            <person name="Haselkorn R."/>
            <person name="Fonstein M."/>
            <person name="Ehrlich S.D."/>
            <person name="Overbeek R."/>
            <person name="Kyrpides N.C."/>
        </authorList>
    </citation>
    <scope>NUCLEOTIDE SEQUENCE [LARGE SCALE GENOMIC DNA]</scope>
    <source>
        <strain>ATCC 14579 / DSM 31 / CCUG 7414 / JCM 2152 / NBRC 15305 / NCIMB 9373 / NCTC 2599 / NRRL B-3711</strain>
    </source>
</reference>
<accession>Q812Z6</accession>
<keyword id="KW-1003">Cell membrane</keyword>
<keyword id="KW-0444">Lipid biosynthesis</keyword>
<keyword id="KW-0443">Lipid metabolism</keyword>
<keyword id="KW-0472">Membrane</keyword>
<keyword id="KW-0594">Phospholipid biosynthesis</keyword>
<keyword id="KW-1208">Phospholipid metabolism</keyword>
<keyword id="KW-1185">Reference proteome</keyword>
<keyword id="KW-0808">Transferase</keyword>
<keyword id="KW-0812">Transmembrane</keyword>
<keyword id="KW-1133">Transmembrane helix</keyword>
<gene>
    <name evidence="1" type="primary">plsY2</name>
    <name type="ordered locus">BC_3604</name>
</gene>
<dbReference type="EC" id="2.3.1.275" evidence="1"/>
<dbReference type="EMBL" id="AE016877">
    <property type="protein sequence ID" value="AAP10537.1"/>
    <property type="molecule type" value="Genomic_DNA"/>
</dbReference>
<dbReference type="RefSeq" id="NP_833336.1">
    <property type="nucleotide sequence ID" value="NC_004722.1"/>
</dbReference>
<dbReference type="SMR" id="Q812Z6"/>
<dbReference type="STRING" id="226900.BC_3604"/>
<dbReference type="KEGG" id="bce:BC3604"/>
<dbReference type="PATRIC" id="fig|226900.8.peg.3700"/>
<dbReference type="HOGENOM" id="CLU_081254_4_0_9"/>
<dbReference type="OrthoDB" id="9777124at2"/>
<dbReference type="UniPathway" id="UPA00085"/>
<dbReference type="Proteomes" id="UP000001417">
    <property type="component" value="Chromosome"/>
</dbReference>
<dbReference type="GO" id="GO:0005886">
    <property type="term" value="C:plasma membrane"/>
    <property type="evidence" value="ECO:0000318"/>
    <property type="project" value="GO_Central"/>
</dbReference>
<dbReference type="GO" id="GO:0043772">
    <property type="term" value="F:acyl-phosphate glycerol-3-phosphate acyltransferase activity"/>
    <property type="evidence" value="ECO:0007669"/>
    <property type="project" value="UniProtKB-UniRule"/>
</dbReference>
<dbReference type="GO" id="GO:0008654">
    <property type="term" value="P:phospholipid biosynthetic process"/>
    <property type="evidence" value="ECO:0007669"/>
    <property type="project" value="UniProtKB-UniRule"/>
</dbReference>
<dbReference type="HAMAP" id="MF_01043">
    <property type="entry name" value="PlsY"/>
    <property type="match status" value="1"/>
</dbReference>
<dbReference type="InterPro" id="IPR003811">
    <property type="entry name" value="G3P_acylTferase_PlsY"/>
</dbReference>
<dbReference type="NCBIfam" id="TIGR00023">
    <property type="entry name" value="glycerol-3-phosphate 1-O-acyltransferase PlsY"/>
    <property type="match status" value="1"/>
</dbReference>
<dbReference type="PANTHER" id="PTHR30309:SF0">
    <property type="entry name" value="GLYCEROL-3-PHOSPHATE ACYLTRANSFERASE-RELATED"/>
    <property type="match status" value="1"/>
</dbReference>
<dbReference type="PANTHER" id="PTHR30309">
    <property type="entry name" value="INNER MEMBRANE PROTEIN YGIH"/>
    <property type="match status" value="1"/>
</dbReference>
<dbReference type="Pfam" id="PF02660">
    <property type="entry name" value="G3P_acyltransf"/>
    <property type="match status" value="1"/>
</dbReference>
<dbReference type="SMART" id="SM01207">
    <property type="entry name" value="G3P_acyltransf"/>
    <property type="match status" value="1"/>
</dbReference>
<protein>
    <recommendedName>
        <fullName evidence="1">Glycerol-3-phosphate acyltransferase 2</fullName>
    </recommendedName>
    <alternativeName>
        <fullName evidence="1">Acyl-PO4 G3P acyltransferase 2</fullName>
    </alternativeName>
    <alternativeName>
        <fullName evidence="1">Acyl-phosphate--glycerol-3-phosphate acyltransferase 2</fullName>
    </alternativeName>
    <alternativeName>
        <fullName evidence="1">G3P acyltransferase 2</fullName>
        <shortName evidence="1">GPAT 2</shortName>
        <ecNumber evidence="1">2.3.1.275</ecNumber>
    </alternativeName>
    <alternativeName>
        <fullName evidence="1">Lysophosphatidic acid synthase 2</fullName>
        <shortName evidence="1">LPA synthase 2</shortName>
    </alternativeName>
</protein>
<organism>
    <name type="scientific">Bacillus cereus (strain ATCC 14579 / DSM 31 / CCUG 7414 / JCM 2152 / NBRC 15305 / NCIMB 9373 / NCTC 2599 / NRRL B-3711)</name>
    <dbReference type="NCBI Taxonomy" id="226900"/>
    <lineage>
        <taxon>Bacteria</taxon>
        <taxon>Bacillati</taxon>
        <taxon>Bacillota</taxon>
        <taxon>Bacilli</taxon>
        <taxon>Bacillales</taxon>
        <taxon>Bacillaceae</taxon>
        <taxon>Bacillus</taxon>
        <taxon>Bacillus cereus group</taxon>
    </lineage>
</organism>
<evidence type="ECO:0000255" key="1">
    <source>
        <dbReference type="HAMAP-Rule" id="MF_01043"/>
    </source>
</evidence>
<name>PLSY2_BACCR</name>
<sequence length="198" mass="21193">MVTTYLLFIVAYLLGSIPFALVVGKIGYGIDIREHGSGNLGGTNTFRTLGKKAGFTVTIADILKGTLATSLPMIFGLDIHPLWFGLAAVLGHVYPIFAKFRGGKAVATSAGVLLCYSPVVFAILAVVFFTLLFTTRYVSLSSMVTAVVAVIASIVSGDKIFIIAMCLLAGMVIYKHRANIGRIINKTEPKANFSKKQK</sequence>
<proteinExistence type="inferred from homology"/>
<feature type="chain" id="PRO_0000188320" description="Glycerol-3-phosphate acyltransferase 2">
    <location>
        <begin position="1"/>
        <end position="198"/>
    </location>
</feature>
<feature type="transmembrane region" description="Helical" evidence="1">
    <location>
        <begin position="4"/>
        <end position="24"/>
    </location>
</feature>
<feature type="transmembrane region" description="Helical" evidence="1">
    <location>
        <begin position="71"/>
        <end position="91"/>
    </location>
</feature>
<feature type="transmembrane region" description="Helical" evidence="1">
    <location>
        <begin position="113"/>
        <end position="133"/>
    </location>
</feature>
<feature type="transmembrane region" description="Helical" evidence="1">
    <location>
        <begin position="147"/>
        <end position="167"/>
    </location>
</feature>
<comment type="function">
    <text evidence="1">Catalyzes the transfer of an acyl group from acyl-phosphate (acyl-PO(4)) to glycerol-3-phosphate (G3P) to form lysophosphatidic acid (LPA). This enzyme utilizes acyl-phosphate as fatty acyl donor, but not acyl-CoA or acyl-ACP.</text>
</comment>
<comment type="catalytic activity">
    <reaction evidence="1">
        <text>an acyl phosphate + sn-glycerol 3-phosphate = a 1-acyl-sn-glycero-3-phosphate + phosphate</text>
        <dbReference type="Rhea" id="RHEA:34075"/>
        <dbReference type="ChEBI" id="CHEBI:43474"/>
        <dbReference type="ChEBI" id="CHEBI:57597"/>
        <dbReference type="ChEBI" id="CHEBI:57970"/>
        <dbReference type="ChEBI" id="CHEBI:59918"/>
        <dbReference type="EC" id="2.3.1.275"/>
    </reaction>
</comment>
<comment type="pathway">
    <text evidence="1">Lipid metabolism; phospholipid metabolism.</text>
</comment>
<comment type="subunit">
    <text evidence="1">Probably interacts with PlsX.</text>
</comment>
<comment type="subcellular location">
    <subcellularLocation>
        <location evidence="1">Cell membrane</location>
        <topology evidence="1">Multi-pass membrane protein</topology>
    </subcellularLocation>
</comment>
<comment type="similarity">
    <text evidence="1">Belongs to the PlsY family.</text>
</comment>